<proteinExistence type="inferred from homology"/>
<organism>
    <name type="scientific">Ectopseudomonas mendocina (strain ymp)</name>
    <name type="common">Pseudomonas mendocina</name>
    <dbReference type="NCBI Taxonomy" id="399739"/>
    <lineage>
        <taxon>Bacteria</taxon>
        <taxon>Pseudomonadati</taxon>
        <taxon>Pseudomonadota</taxon>
        <taxon>Gammaproteobacteria</taxon>
        <taxon>Pseudomonadales</taxon>
        <taxon>Pseudomonadaceae</taxon>
        <taxon>Ectopseudomonas</taxon>
    </lineage>
</organism>
<reference key="1">
    <citation type="submission" date="2007-04" db="EMBL/GenBank/DDBJ databases">
        <title>Complete sequence of Pseudomonas mendocina ymp.</title>
        <authorList>
            <consortium name="US DOE Joint Genome Institute"/>
            <person name="Copeland A."/>
            <person name="Lucas S."/>
            <person name="Lapidus A."/>
            <person name="Barry K."/>
            <person name="Glavina del Rio T."/>
            <person name="Dalin E."/>
            <person name="Tice H."/>
            <person name="Pitluck S."/>
            <person name="Kiss H."/>
            <person name="Brettin T."/>
            <person name="Detter J.C."/>
            <person name="Bruce D."/>
            <person name="Han C."/>
            <person name="Schmutz J."/>
            <person name="Larimer F."/>
            <person name="Land M."/>
            <person name="Hauser L."/>
            <person name="Kyrpides N."/>
            <person name="Mikhailova N."/>
            <person name="Hersman L."/>
            <person name="Dubois J."/>
            <person name="Maurice P."/>
            <person name="Richardson P."/>
        </authorList>
    </citation>
    <scope>NUCLEOTIDE SEQUENCE [LARGE SCALE GENOMIC DNA]</scope>
    <source>
        <strain>ymp</strain>
    </source>
</reference>
<feature type="chain" id="PRO_1000072671" description="UPF0235 protein Pmen_4153">
    <location>
        <begin position="1"/>
        <end position="98"/>
    </location>
</feature>
<evidence type="ECO:0000255" key="1">
    <source>
        <dbReference type="HAMAP-Rule" id="MF_00634"/>
    </source>
</evidence>
<gene>
    <name type="ordered locus">Pmen_4153</name>
</gene>
<accession>A4XZY4</accession>
<protein>
    <recommendedName>
        <fullName evidence="1">UPF0235 protein Pmen_4153</fullName>
    </recommendedName>
</protein>
<dbReference type="EMBL" id="CP000680">
    <property type="protein sequence ID" value="ABP86900.1"/>
    <property type="molecule type" value="Genomic_DNA"/>
</dbReference>
<dbReference type="SMR" id="A4XZY4"/>
<dbReference type="STRING" id="399739.Pmen_4153"/>
<dbReference type="KEGG" id="pmy:Pmen_4153"/>
<dbReference type="PATRIC" id="fig|399739.8.peg.4204"/>
<dbReference type="eggNOG" id="COG1872">
    <property type="taxonomic scope" value="Bacteria"/>
</dbReference>
<dbReference type="HOGENOM" id="CLU_130694_5_0_6"/>
<dbReference type="OrthoDB" id="9800587at2"/>
<dbReference type="GO" id="GO:0005737">
    <property type="term" value="C:cytoplasm"/>
    <property type="evidence" value="ECO:0007669"/>
    <property type="project" value="TreeGrafter"/>
</dbReference>
<dbReference type="Gene3D" id="3.30.1200.10">
    <property type="entry name" value="YggU-like"/>
    <property type="match status" value="1"/>
</dbReference>
<dbReference type="HAMAP" id="MF_00634">
    <property type="entry name" value="UPF0235"/>
    <property type="match status" value="1"/>
</dbReference>
<dbReference type="InterPro" id="IPR003746">
    <property type="entry name" value="DUF167"/>
</dbReference>
<dbReference type="InterPro" id="IPR036591">
    <property type="entry name" value="YggU-like_sf"/>
</dbReference>
<dbReference type="NCBIfam" id="TIGR00251">
    <property type="entry name" value="DUF167 family protein"/>
    <property type="match status" value="1"/>
</dbReference>
<dbReference type="PANTHER" id="PTHR13420">
    <property type="entry name" value="UPF0235 PROTEIN C15ORF40"/>
    <property type="match status" value="1"/>
</dbReference>
<dbReference type="PANTHER" id="PTHR13420:SF7">
    <property type="entry name" value="UPF0235 PROTEIN C15ORF40"/>
    <property type="match status" value="1"/>
</dbReference>
<dbReference type="Pfam" id="PF02594">
    <property type="entry name" value="DUF167"/>
    <property type="match status" value="1"/>
</dbReference>
<dbReference type="SMART" id="SM01152">
    <property type="entry name" value="DUF167"/>
    <property type="match status" value="1"/>
</dbReference>
<dbReference type="SUPFAM" id="SSF69786">
    <property type="entry name" value="YggU-like"/>
    <property type="match status" value="1"/>
</dbReference>
<comment type="similarity">
    <text evidence="1">Belongs to the UPF0235 family.</text>
</comment>
<name>Y4153_ECTM1</name>
<sequence>MSYFRWDGEDLILDCHLQPKASKDEFAGLHGERLKIRLTAPPVEGKANAHLLAFLAKAFGVAKAQVSLESGELNRHKRLRIHAPQRLPTLPGLIFPGK</sequence>